<sequence>ARARLGVRRFRRKR</sequence>
<proteinExistence type="evidence at protein level"/>
<name>UP01_PSEMZ</name>
<reference key="1">
    <citation type="journal article" date="2008" name="J. Proteomics">
        <title>A proteomics approach to identify proteins differentially expressed in Douglas-fir seedlings infected by Phellinus sulphurascens.</title>
        <authorList>
            <person name="Islam M.A."/>
            <person name="Sturrock R.N."/>
            <person name="Ekramoddoullah A.K.M."/>
        </authorList>
    </citation>
    <scope>IDENTIFICATION BY MASS SPECTROMETRY</scope>
</reference>
<organism>
    <name type="scientific">Pseudotsuga menziesii</name>
    <name type="common">Douglas-fir</name>
    <name type="synonym">Abies menziesii</name>
    <dbReference type="NCBI Taxonomy" id="3357"/>
    <lineage>
        <taxon>Eukaryota</taxon>
        <taxon>Viridiplantae</taxon>
        <taxon>Streptophyta</taxon>
        <taxon>Embryophyta</taxon>
        <taxon>Tracheophyta</taxon>
        <taxon>Spermatophyta</taxon>
        <taxon>Pinopsida</taxon>
        <taxon>Pinidae</taxon>
        <taxon>Conifers I</taxon>
        <taxon>Pinales</taxon>
        <taxon>Pinaceae</taxon>
        <taxon>Pseudotsuga</taxon>
    </lineage>
</organism>
<feature type="chain" id="PRO_0000347288" description="Unknown protein 1">
    <location>
        <begin position="1" status="less than"/>
        <end position="14" status="greater than"/>
    </location>
</feature>
<feature type="non-consecutive residues" evidence="1">
    <location>
        <begin position="8"/>
        <end position="9"/>
    </location>
</feature>
<feature type="non-terminal residue" evidence="1">
    <location>
        <position position="1"/>
    </location>
</feature>
<feature type="non-terminal residue" evidence="1">
    <location>
        <position position="14"/>
    </location>
</feature>
<protein>
    <recommendedName>
        <fullName>Unknown protein 1</fullName>
    </recommendedName>
</protein>
<accession>P85956</accession>
<evidence type="ECO:0000303" key="1">
    <source>
    </source>
</evidence>